<sequence>MSVSVLIVDDSAVVREVLSQMLSSAPDIEVLGAAPDPIFAMTRMKQRWPDVIVLDIEMPRMDGLTFLRKIMDERPTPVIICSSLTEKGARITLDALAAGAVAIITKPALNQRAFLLEAAKELVQEVRDAARAKMGVVKRISQGAAEHAPPAPKLTADVVLEAPSGLEKYRTTEKIIAIGTSTGGTQALEYLLPKLPATCPGVAVVQHMPEKFTASFAERLNRLCRVEVKEAQTGDRLISGVALIAPGGKHLLVKRNGAQYVADVKDGPLVSRHRPSVDVLFRSVAVCAGGNAIGVIMTGMGDDGARGMREMHDAGARTVAQDEESCVVFGMPAEAINHGGVDEVMSLERIAHMLAGIRG</sequence>
<name>CHEB1_CHRVO</name>
<comment type="function">
    <text evidence="1">Involved in chemotaxis. Part of a chemotaxis signal transduction system that modulates chemotaxis in response to various stimuli. Catalyzes the demethylation of specific methylglutamate residues introduced into the chemoreceptors (methyl-accepting chemotaxis proteins or MCP) by CheR. Also mediates the irreversible deamidation of specific glutamine residues to glutamic acid.</text>
</comment>
<comment type="catalytic activity">
    <reaction evidence="1">
        <text>[protein]-L-glutamate 5-O-methyl ester + H2O = L-glutamyl-[protein] + methanol + H(+)</text>
        <dbReference type="Rhea" id="RHEA:23236"/>
        <dbReference type="Rhea" id="RHEA-COMP:10208"/>
        <dbReference type="Rhea" id="RHEA-COMP:10311"/>
        <dbReference type="ChEBI" id="CHEBI:15377"/>
        <dbReference type="ChEBI" id="CHEBI:15378"/>
        <dbReference type="ChEBI" id="CHEBI:17790"/>
        <dbReference type="ChEBI" id="CHEBI:29973"/>
        <dbReference type="ChEBI" id="CHEBI:82795"/>
        <dbReference type="EC" id="3.1.1.61"/>
    </reaction>
</comment>
<comment type="catalytic activity">
    <reaction evidence="1">
        <text>L-glutaminyl-[protein] + H2O = L-glutamyl-[protein] + NH4(+)</text>
        <dbReference type="Rhea" id="RHEA:16441"/>
        <dbReference type="Rhea" id="RHEA-COMP:10207"/>
        <dbReference type="Rhea" id="RHEA-COMP:10208"/>
        <dbReference type="ChEBI" id="CHEBI:15377"/>
        <dbReference type="ChEBI" id="CHEBI:28938"/>
        <dbReference type="ChEBI" id="CHEBI:29973"/>
        <dbReference type="ChEBI" id="CHEBI:30011"/>
        <dbReference type="EC" id="3.5.1.44"/>
    </reaction>
</comment>
<comment type="subcellular location">
    <subcellularLocation>
        <location evidence="1">Cytoplasm</location>
    </subcellularLocation>
</comment>
<comment type="domain">
    <text evidence="1">Contains a C-terminal catalytic domain, and an N-terminal region which modulates catalytic activity.</text>
</comment>
<comment type="PTM">
    <text evidence="1">Phosphorylated by CheA. Phosphorylation of the N-terminal regulatory domain activates the methylesterase activity.</text>
</comment>
<comment type="similarity">
    <text evidence="1">Belongs to the CheB family.</text>
</comment>
<protein>
    <recommendedName>
        <fullName evidence="1">Protein-glutamate methylesterase/protein-glutamine glutaminase 1</fullName>
        <ecNumber evidence="1">3.1.1.61</ecNumber>
        <ecNumber evidence="1">3.5.1.44</ecNumber>
    </recommendedName>
</protein>
<reference key="1">
    <citation type="journal article" date="2003" name="Proc. Natl. Acad. Sci. U.S.A.">
        <title>The complete genome sequence of Chromobacterium violaceum reveals remarkable and exploitable bacterial adaptability.</title>
        <authorList>
            <person name="Vasconcelos A.T.R."/>
            <person name="de Almeida D.F."/>
            <person name="Hungria M."/>
            <person name="Guimaraes C.T."/>
            <person name="Antonio R.V."/>
            <person name="Almeida F.C."/>
            <person name="de Almeida L.G.P."/>
            <person name="de Almeida R."/>
            <person name="Alves-Gomes J.A."/>
            <person name="Andrade E.M."/>
            <person name="Araripe J."/>
            <person name="de Araujo M.F.F."/>
            <person name="Astolfi-Filho S."/>
            <person name="Azevedo V."/>
            <person name="Baptista A.J."/>
            <person name="Bataus L.A.M."/>
            <person name="Batista J.S."/>
            <person name="Belo A."/>
            <person name="van den Berg C."/>
            <person name="Bogo M."/>
            <person name="Bonatto S."/>
            <person name="Bordignon J."/>
            <person name="Brigido M.M."/>
            <person name="Brito C.A."/>
            <person name="Brocchi M."/>
            <person name="Burity H.A."/>
            <person name="Camargo A.A."/>
            <person name="Cardoso D.D.P."/>
            <person name="Carneiro N.P."/>
            <person name="Carraro D.M."/>
            <person name="Carvalho C.M.B."/>
            <person name="Cascardo J.C.M."/>
            <person name="Cavada B.S."/>
            <person name="Chueire L.M.O."/>
            <person name="Creczynski-Pasa T.B."/>
            <person name="Cunha-Junior N.C."/>
            <person name="Fagundes N."/>
            <person name="Falcao C.L."/>
            <person name="Fantinatti F."/>
            <person name="Farias I.P."/>
            <person name="Felipe M.S.S."/>
            <person name="Ferrari L.P."/>
            <person name="Ferro J.A."/>
            <person name="Ferro M.I.T."/>
            <person name="Franco G.R."/>
            <person name="Freitas N.S.A."/>
            <person name="Furlan L.R."/>
            <person name="Gazzinelli R.T."/>
            <person name="Gomes E.A."/>
            <person name="Goncalves P.R."/>
            <person name="Grangeiro T.B."/>
            <person name="Grattapaglia D."/>
            <person name="Grisard E.C."/>
            <person name="Hanna E.S."/>
            <person name="Jardim S.N."/>
            <person name="Laurino J."/>
            <person name="Leoi L.C.T."/>
            <person name="Lima L.F.A."/>
            <person name="Loureiro M.F."/>
            <person name="Lyra M.C.C.P."/>
            <person name="Madeira H.M.F."/>
            <person name="Manfio G.P."/>
            <person name="Maranhao A.Q."/>
            <person name="Martins W.S."/>
            <person name="di Mauro S.M.Z."/>
            <person name="de Medeiros S.R.B."/>
            <person name="Meissner R.V."/>
            <person name="Moreira M.A.M."/>
            <person name="Nascimento F.F."/>
            <person name="Nicolas M.F."/>
            <person name="Oliveira J.G."/>
            <person name="Oliveira S.C."/>
            <person name="Paixao R.F.C."/>
            <person name="Parente J.A."/>
            <person name="Pedrosa F.O."/>
            <person name="Pena S.D.J."/>
            <person name="Pereira J.O."/>
            <person name="Pereira M."/>
            <person name="Pinto L.S.R.C."/>
            <person name="Pinto L.S."/>
            <person name="Porto J.I.R."/>
            <person name="Potrich D.P."/>
            <person name="Ramalho-Neto C.E."/>
            <person name="Reis A.M.M."/>
            <person name="Rigo L.U."/>
            <person name="Rondinelli E."/>
            <person name="Santos E.B.P."/>
            <person name="Santos F.R."/>
            <person name="Schneider M.P.C."/>
            <person name="Seuanez H.N."/>
            <person name="Silva A.M.R."/>
            <person name="da Silva A.L.C."/>
            <person name="Silva D.W."/>
            <person name="Silva R."/>
            <person name="Simoes I.C."/>
            <person name="Simon D."/>
            <person name="Soares C.M.A."/>
            <person name="Soares R.B.A."/>
            <person name="Souza E.M."/>
            <person name="Souza K.R.L."/>
            <person name="Souza R.C."/>
            <person name="Steffens M.B.R."/>
            <person name="Steindel M."/>
            <person name="Teixeira S.R."/>
            <person name="Urmenyi T."/>
            <person name="Vettore A."/>
            <person name="Wassem R."/>
            <person name="Zaha A."/>
            <person name="Simpson A.J.G."/>
        </authorList>
    </citation>
    <scope>NUCLEOTIDE SEQUENCE [LARGE SCALE GENOMIC DNA]</scope>
    <source>
        <strain>ATCC 12472 / DSM 30191 / JCM 1249 / CCUG 213 / NBRC 12614 / NCIMB 9131 / NCTC 9757 / MK</strain>
    </source>
</reference>
<reference key="2">
    <citation type="journal article" date="2004" name="Genet. Mol. Res.">
        <title>Chemotaxis and flagellar genes of Chromobacterium violaceum.</title>
        <authorList>
            <person name="Pereira M."/>
            <person name="Parente J.A."/>
            <person name="Bataus L.A.M."/>
            <person name="Cardoso D.D.P."/>
            <person name="Soares R.B.A."/>
            <person name="Soares C.M.A."/>
        </authorList>
    </citation>
    <scope>DISCUSSION OF CHEMOTAXIS GENOMIC COMPLEXITY</scope>
    <source>
        <strain>ATCC 12472 / DSM 30191 / JCM 1249 / CCUG 213 / NBRC 12614 / NCIMB 9131 / NCTC 9757 / MK</strain>
    </source>
</reference>
<keyword id="KW-0145">Chemotaxis</keyword>
<keyword id="KW-0963">Cytoplasm</keyword>
<keyword id="KW-0378">Hydrolase</keyword>
<keyword id="KW-0597">Phosphoprotein</keyword>
<keyword id="KW-1185">Reference proteome</keyword>
<accession>Q7NV40</accession>
<organism>
    <name type="scientific">Chromobacterium violaceum (strain ATCC 12472 / DSM 30191 / JCM 1249 / CCUG 213 / NBRC 12614 / NCIMB 9131 / NCTC 9757 / MK)</name>
    <dbReference type="NCBI Taxonomy" id="243365"/>
    <lineage>
        <taxon>Bacteria</taxon>
        <taxon>Pseudomonadati</taxon>
        <taxon>Pseudomonadota</taxon>
        <taxon>Betaproteobacteria</taxon>
        <taxon>Neisseriales</taxon>
        <taxon>Chromobacteriaceae</taxon>
        <taxon>Chromobacterium</taxon>
    </lineage>
</organism>
<evidence type="ECO:0000255" key="1">
    <source>
        <dbReference type="HAMAP-Rule" id="MF_00099"/>
    </source>
</evidence>
<gene>
    <name evidence="1" type="primary">cheB1</name>
    <name type="ordered locus">CV_2506</name>
</gene>
<dbReference type="EC" id="3.1.1.61" evidence="1"/>
<dbReference type="EC" id="3.5.1.44" evidence="1"/>
<dbReference type="EMBL" id="AE016825">
    <property type="protein sequence ID" value="AAQ60177.1"/>
    <property type="molecule type" value="Genomic_DNA"/>
</dbReference>
<dbReference type="RefSeq" id="WP_011136053.1">
    <property type="nucleotide sequence ID" value="NC_005085.1"/>
</dbReference>
<dbReference type="SMR" id="Q7NV40"/>
<dbReference type="STRING" id="243365.CV_2506"/>
<dbReference type="GeneID" id="66368256"/>
<dbReference type="KEGG" id="cvi:CV_2506"/>
<dbReference type="eggNOG" id="COG2201">
    <property type="taxonomic scope" value="Bacteria"/>
</dbReference>
<dbReference type="HOGENOM" id="CLU_000445_51_0_4"/>
<dbReference type="OrthoDB" id="9793421at2"/>
<dbReference type="Proteomes" id="UP000001424">
    <property type="component" value="Chromosome"/>
</dbReference>
<dbReference type="GO" id="GO:0005737">
    <property type="term" value="C:cytoplasm"/>
    <property type="evidence" value="ECO:0007669"/>
    <property type="project" value="UniProtKB-SubCell"/>
</dbReference>
<dbReference type="GO" id="GO:0000156">
    <property type="term" value="F:phosphorelay response regulator activity"/>
    <property type="evidence" value="ECO:0007669"/>
    <property type="project" value="InterPro"/>
</dbReference>
<dbReference type="GO" id="GO:0008984">
    <property type="term" value="F:protein-glutamate methylesterase activity"/>
    <property type="evidence" value="ECO:0007669"/>
    <property type="project" value="UniProtKB-UniRule"/>
</dbReference>
<dbReference type="GO" id="GO:0050568">
    <property type="term" value="F:protein-glutamine glutaminase activity"/>
    <property type="evidence" value="ECO:0007669"/>
    <property type="project" value="UniProtKB-UniRule"/>
</dbReference>
<dbReference type="GO" id="GO:0006935">
    <property type="term" value="P:chemotaxis"/>
    <property type="evidence" value="ECO:0007669"/>
    <property type="project" value="UniProtKB-UniRule"/>
</dbReference>
<dbReference type="CDD" id="cd16432">
    <property type="entry name" value="CheB_Rec"/>
    <property type="match status" value="1"/>
</dbReference>
<dbReference type="CDD" id="cd17541">
    <property type="entry name" value="REC_CheB-like"/>
    <property type="match status" value="1"/>
</dbReference>
<dbReference type="Gene3D" id="3.40.50.2300">
    <property type="match status" value="1"/>
</dbReference>
<dbReference type="Gene3D" id="3.40.50.180">
    <property type="entry name" value="Methylesterase CheB, C-terminal domain"/>
    <property type="match status" value="1"/>
</dbReference>
<dbReference type="HAMAP" id="MF_00099">
    <property type="entry name" value="CheB_chemtxs"/>
    <property type="match status" value="1"/>
</dbReference>
<dbReference type="InterPro" id="IPR008248">
    <property type="entry name" value="CheB-like"/>
</dbReference>
<dbReference type="InterPro" id="IPR035909">
    <property type="entry name" value="CheB_C"/>
</dbReference>
<dbReference type="InterPro" id="IPR011006">
    <property type="entry name" value="CheY-like_superfamily"/>
</dbReference>
<dbReference type="InterPro" id="IPR000673">
    <property type="entry name" value="Sig_transdc_resp-reg_Me-estase"/>
</dbReference>
<dbReference type="InterPro" id="IPR001789">
    <property type="entry name" value="Sig_transdc_resp-reg_receiver"/>
</dbReference>
<dbReference type="NCBIfam" id="NF001965">
    <property type="entry name" value="PRK00742.1"/>
    <property type="match status" value="1"/>
</dbReference>
<dbReference type="NCBIfam" id="NF009206">
    <property type="entry name" value="PRK12555.1"/>
    <property type="match status" value="1"/>
</dbReference>
<dbReference type="PANTHER" id="PTHR42872">
    <property type="entry name" value="PROTEIN-GLUTAMATE METHYLESTERASE/PROTEIN-GLUTAMINE GLUTAMINASE"/>
    <property type="match status" value="1"/>
</dbReference>
<dbReference type="PANTHER" id="PTHR42872:SF6">
    <property type="entry name" value="PROTEIN-GLUTAMATE METHYLESTERASE_PROTEIN-GLUTAMINE GLUTAMINASE"/>
    <property type="match status" value="1"/>
</dbReference>
<dbReference type="Pfam" id="PF01339">
    <property type="entry name" value="CheB_methylest"/>
    <property type="match status" value="1"/>
</dbReference>
<dbReference type="Pfam" id="PF00072">
    <property type="entry name" value="Response_reg"/>
    <property type="match status" value="1"/>
</dbReference>
<dbReference type="PIRSF" id="PIRSF000876">
    <property type="entry name" value="RR_chemtxs_CheB"/>
    <property type="match status" value="1"/>
</dbReference>
<dbReference type="SMART" id="SM00448">
    <property type="entry name" value="REC"/>
    <property type="match status" value="1"/>
</dbReference>
<dbReference type="SUPFAM" id="SSF52172">
    <property type="entry name" value="CheY-like"/>
    <property type="match status" value="1"/>
</dbReference>
<dbReference type="SUPFAM" id="SSF52738">
    <property type="entry name" value="Methylesterase CheB, C-terminal domain"/>
    <property type="match status" value="1"/>
</dbReference>
<dbReference type="PROSITE" id="PS50122">
    <property type="entry name" value="CHEB"/>
    <property type="match status" value="1"/>
</dbReference>
<dbReference type="PROSITE" id="PS50110">
    <property type="entry name" value="RESPONSE_REGULATORY"/>
    <property type="match status" value="1"/>
</dbReference>
<proteinExistence type="inferred from homology"/>
<feature type="chain" id="PRO_0000157986" description="Protein-glutamate methylesterase/protein-glutamine glutaminase 1">
    <location>
        <begin position="1"/>
        <end position="359"/>
    </location>
</feature>
<feature type="domain" description="Response regulatory" evidence="1">
    <location>
        <begin position="4"/>
        <end position="121"/>
    </location>
</feature>
<feature type="domain" description="CheB-type methylesterase" evidence="1">
    <location>
        <begin position="169"/>
        <end position="354"/>
    </location>
</feature>
<feature type="active site" evidence="1">
    <location>
        <position position="181"/>
    </location>
</feature>
<feature type="active site" evidence="1">
    <location>
        <position position="207"/>
    </location>
</feature>
<feature type="active site" evidence="1">
    <location>
        <position position="303"/>
    </location>
</feature>
<feature type="modified residue" description="4-aspartylphosphate" evidence="1">
    <location>
        <position position="55"/>
    </location>
</feature>